<gene>
    <name evidence="1" type="primary">recU</name>
    <name type="ordered locus">SSP1295</name>
</gene>
<proteinExistence type="inferred from homology"/>
<name>RECU_STAS1</name>
<organism>
    <name type="scientific">Staphylococcus saprophyticus subsp. saprophyticus (strain ATCC 15305 / DSM 20229 / NCIMB 8711 / NCTC 7292 / S-41)</name>
    <dbReference type="NCBI Taxonomy" id="342451"/>
    <lineage>
        <taxon>Bacteria</taxon>
        <taxon>Bacillati</taxon>
        <taxon>Bacillota</taxon>
        <taxon>Bacilli</taxon>
        <taxon>Bacillales</taxon>
        <taxon>Staphylococcaceae</taxon>
        <taxon>Staphylococcus</taxon>
    </lineage>
</organism>
<reference key="1">
    <citation type="journal article" date="2005" name="Proc. Natl. Acad. Sci. U.S.A.">
        <title>Whole genome sequence of Staphylococcus saprophyticus reveals the pathogenesis of uncomplicated urinary tract infection.</title>
        <authorList>
            <person name="Kuroda M."/>
            <person name="Yamashita A."/>
            <person name="Hirakawa H."/>
            <person name="Kumano M."/>
            <person name="Morikawa K."/>
            <person name="Higashide M."/>
            <person name="Maruyama A."/>
            <person name="Inose Y."/>
            <person name="Matoba K."/>
            <person name="Toh H."/>
            <person name="Kuhara S."/>
            <person name="Hattori M."/>
            <person name="Ohta T."/>
        </authorList>
    </citation>
    <scope>NUCLEOTIDE SEQUENCE [LARGE SCALE GENOMIC DNA]</scope>
    <source>
        <strain>ATCC 15305 / DSM 20229 / NCIMB 8711 / NCTC 7292 / S-41</strain>
    </source>
</reference>
<sequence length="208" mass="24678">MNYPNGKPFNRNKSQVGRTHKGQTSKIDYGGRGMSLEKDIELSNDYYLNRGIAVIHKKPTPIQIVNVHYPMRSKAVINEAYFRTPSTTDYNGIYHGRYLDFEAKETKNKTSFPLNNMHEHQVRHMEACYQQQGVVFLLIRFKSLDEVYLLPYANFKKFWERHIQEIKKSVTVEEIRKNGYYIPYQYQPRLNYLKTVDKLILDESEDRV</sequence>
<comment type="function">
    <text evidence="1">Endonuclease that resolves Holliday junction intermediates in genetic recombination. Cleaves mobile four-strand junctions by introducing symmetrical nicks in paired strands. Promotes annealing of linear ssDNA with homologous dsDNA. Required for DNA repair, homologous recombination and chromosome segregation.</text>
</comment>
<comment type="catalytic activity">
    <reaction evidence="1">
        <text>Endonucleolytic cleavage at a junction such as a reciprocal single-stranded crossover between two homologous DNA duplexes (Holliday junction).</text>
        <dbReference type="EC" id="3.1.21.10"/>
    </reaction>
</comment>
<comment type="cofactor">
    <cofactor evidence="1">
        <name>Mg(2+)</name>
        <dbReference type="ChEBI" id="CHEBI:18420"/>
    </cofactor>
    <text evidence="1">Binds 1 Mg(2+) ion per subunit.</text>
</comment>
<comment type="subcellular location">
    <subcellularLocation>
        <location evidence="1">Cytoplasm</location>
    </subcellularLocation>
</comment>
<comment type="similarity">
    <text evidence="1">Belongs to the RecU family.</text>
</comment>
<dbReference type="EC" id="3.1.21.10" evidence="1"/>
<dbReference type="EMBL" id="AP008934">
    <property type="protein sequence ID" value="BAE18440.1"/>
    <property type="molecule type" value="Genomic_DNA"/>
</dbReference>
<dbReference type="RefSeq" id="WP_011303083.1">
    <property type="nucleotide sequence ID" value="NZ_MTGA01000038.1"/>
</dbReference>
<dbReference type="SMR" id="Q49XQ5"/>
<dbReference type="GeneID" id="3616535"/>
<dbReference type="KEGG" id="ssp:SSP1295"/>
<dbReference type="PATRIC" id="fig|342451.11.peg.1297"/>
<dbReference type="eggNOG" id="COG3331">
    <property type="taxonomic scope" value="Bacteria"/>
</dbReference>
<dbReference type="HOGENOM" id="CLU_096340_0_0_9"/>
<dbReference type="OrthoDB" id="9783592at2"/>
<dbReference type="Proteomes" id="UP000006371">
    <property type="component" value="Chromosome"/>
</dbReference>
<dbReference type="GO" id="GO:0005737">
    <property type="term" value="C:cytoplasm"/>
    <property type="evidence" value="ECO:0007669"/>
    <property type="project" value="UniProtKB-SubCell"/>
</dbReference>
<dbReference type="GO" id="GO:0004519">
    <property type="term" value="F:endonuclease activity"/>
    <property type="evidence" value="ECO:0007669"/>
    <property type="project" value="UniProtKB-UniRule"/>
</dbReference>
<dbReference type="GO" id="GO:0000287">
    <property type="term" value="F:magnesium ion binding"/>
    <property type="evidence" value="ECO:0007669"/>
    <property type="project" value="UniProtKB-UniRule"/>
</dbReference>
<dbReference type="GO" id="GO:0003676">
    <property type="term" value="F:nucleic acid binding"/>
    <property type="evidence" value="ECO:0007669"/>
    <property type="project" value="InterPro"/>
</dbReference>
<dbReference type="GO" id="GO:0007059">
    <property type="term" value="P:chromosome segregation"/>
    <property type="evidence" value="ECO:0007669"/>
    <property type="project" value="UniProtKB-UniRule"/>
</dbReference>
<dbReference type="GO" id="GO:0006310">
    <property type="term" value="P:DNA recombination"/>
    <property type="evidence" value="ECO:0007669"/>
    <property type="project" value="UniProtKB-UniRule"/>
</dbReference>
<dbReference type="GO" id="GO:0006281">
    <property type="term" value="P:DNA repair"/>
    <property type="evidence" value="ECO:0007669"/>
    <property type="project" value="UniProtKB-UniRule"/>
</dbReference>
<dbReference type="CDD" id="cd22354">
    <property type="entry name" value="RecU-like"/>
    <property type="match status" value="1"/>
</dbReference>
<dbReference type="Gene3D" id="3.40.1350.10">
    <property type="match status" value="1"/>
</dbReference>
<dbReference type="HAMAP" id="MF_00130">
    <property type="entry name" value="RecU"/>
    <property type="match status" value="1"/>
</dbReference>
<dbReference type="InterPro" id="IPR004612">
    <property type="entry name" value="Resolv_RecU"/>
</dbReference>
<dbReference type="InterPro" id="IPR011335">
    <property type="entry name" value="Restrct_endonuc-II-like"/>
</dbReference>
<dbReference type="InterPro" id="IPR011856">
    <property type="entry name" value="tRNA_endonuc-like_dom_sf"/>
</dbReference>
<dbReference type="NCBIfam" id="NF002581">
    <property type="entry name" value="PRK02234.1-2"/>
    <property type="match status" value="1"/>
</dbReference>
<dbReference type="NCBIfam" id="NF002583">
    <property type="entry name" value="PRK02234.1-4"/>
    <property type="match status" value="1"/>
</dbReference>
<dbReference type="NCBIfam" id="NF002584">
    <property type="entry name" value="PRK02234.1-5"/>
    <property type="match status" value="1"/>
</dbReference>
<dbReference type="NCBIfam" id="TIGR00648">
    <property type="entry name" value="recU"/>
    <property type="match status" value="1"/>
</dbReference>
<dbReference type="Pfam" id="PF03838">
    <property type="entry name" value="RecU"/>
    <property type="match status" value="1"/>
</dbReference>
<dbReference type="PIRSF" id="PIRSF037785">
    <property type="entry name" value="RecU"/>
    <property type="match status" value="1"/>
</dbReference>
<dbReference type="SUPFAM" id="SSF52980">
    <property type="entry name" value="Restriction endonuclease-like"/>
    <property type="match status" value="1"/>
</dbReference>
<feature type="chain" id="PRO_1000016742" description="Holliday junction resolvase RecU">
    <location>
        <begin position="1"/>
        <end position="208"/>
    </location>
</feature>
<feature type="region of interest" description="Disordered" evidence="2">
    <location>
        <begin position="1"/>
        <end position="30"/>
    </location>
</feature>
<feature type="binding site" evidence="1">
    <location>
        <position position="87"/>
    </location>
    <ligand>
        <name>Mg(2+)</name>
        <dbReference type="ChEBI" id="CHEBI:18420"/>
    </ligand>
</feature>
<feature type="binding site" evidence="1">
    <location>
        <position position="89"/>
    </location>
    <ligand>
        <name>Mg(2+)</name>
        <dbReference type="ChEBI" id="CHEBI:18420"/>
    </ligand>
</feature>
<feature type="binding site" evidence="1">
    <location>
        <position position="102"/>
    </location>
    <ligand>
        <name>Mg(2+)</name>
        <dbReference type="ChEBI" id="CHEBI:18420"/>
    </ligand>
</feature>
<feature type="binding site" evidence="1">
    <location>
        <position position="121"/>
    </location>
    <ligand>
        <name>Mg(2+)</name>
        <dbReference type="ChEBI" id="CHEBI:18420"/>
    </ligand>
</feature>
<feature type="site" description="Transition state stabilizer" evidence="1">
    <location>
        <position position="104"/>
    </location>
</feature>
<protein>
    <recommendedName>
        <fullName evidence="1">Holliday junction resolvase RecU</fullName>
        <ecNumber evidence="1">3.1.21.10</ecNumber>
    </recommendedName>
    <alternativeName>
        <fullName evidence="1">Recombination protein U homolog</fullName>
    </alternativeName>
</protein>
<keyword id="KW-0963">Cytoplasm</keyword>
<keyword id="KW-0227">DNA damage</keyword>
<keyword id="KW-0233">DNA recombination</keyword>
<keyword id="KW-0234">DNA repair</keyword>
<keyword id="KW-0255">Endonuclease</keyword>
<keyword id="KW-0378">Hydrolase</keyword>
<keyword id="KW-0460">Magnesium</keyword>
<keyword id="KW-0479">Metal-binding</keyword>
<keyword id="KW-0540">Nuclease</keyword>
<keyword id="KW-1185">Reference proteome</keyword>
<evidence type="ECO:0000255" key="1">
    <source>
        <dbReference type="HAMAP-Rule" id="MF_00130"/>
    </source>
</evidence>
<evidence type="ECO:0000256" key="2">
    <source>
        <dbReference type="SAM" id="MobiDB-lite"/>
    </source>
</evidence>
<accession>Q49XQ5</accession>